<proteinExistence type="inferred from homology"/>
<comment type="function">
    <text evidence="1">Binds to DNA non-specifically. Could be a regulatory factor involved in maltose metabolism.</text>
</comment>
<comment type="similarity">
    <text evidence="1">Belongs to the SfsA family.</text>
</comment>
<name>SFSA_ECODH</name>
<keyword id="KW-0238">DNA-binding</keyword>
<gene>
    <name evidence="1" type="primary">sfsA</name>
    <name type="ordered locus">ECDH10B_0126</name>
</gene>
<protein>
    <recommendedName>
        <fullName evidence="1">Sugar fermentation stimulation protein A</fullName>
    </recommendedName>
</protein>
<feature type="chain" id="PRO_1000093571" description="Sugar fermentation stimulation protein A">
    <location>
        <begin position="1"/>
        <end position="234"/>
    </location>
</feature>
<feature type="DNA-binding region" description="H-T-H motif" evidence="1">
    <location>
        <begin position="201"/>
        <end position="220"/>
    </location>
</feature>
<accession>B1XCC1</accession>
<evidence type="ECO:0000255" key="1">
    <source>
        <dbReference type="HAMAP-Rule" id="MF_00095"/>
    </source>
</evidence>
<dbReference type="EMBL" id="CP000948">
    <property type="protein sequence ID" value="ACB01325.1"/>
    <property type="molecule type" value="Genomic_DNA"/>
</dbReference>
<dbReference type="RefSeq" id="WP_000396036.1">
    <property type="nucleotide sequence ID" value="NC_010473.1"/>
</dbReference>
<dbReference type="SMR" id="B1XCC1"/>
<dbReference type="GeneID" id="75202039"/>
<dbReference type="KEGG" id="ecd:ECDH10B_0126"/>
<dbReference type="HOGENOM" id="CLU_052299_2_0_6"/>
<dbReference type="GO" id="GO:0003677">
    <property type="term" value="F:DNA binding"/>
    <property type="evidence" value="ECO:0007669"/>
    <property type="project" value="UniProtKB-KW"/>
</dbReference>
<dbReference type="CDD" id="cd22359">
    <property type="entry name" value="SfsA-like_bacterial"/>
    <property type="match status" value="1"/>
</dbReference>
<dbReference type="FunFam" id="2.40.50.580:FF:000001">
    <property type="entry name" value="Sugar fermentation stimulation protein A"/>
    <property type="match status" value="1"/>
</dbReference>
<dbReference type="FunFam" id="3.40.1350.60:FF:000001">
    <property type="entry name" value="Sugar fermentation stimulation protein A"/>
    <property type="match status" value="1"/>
</dbReference>
<dbReference type="Gene3D" id="2.40.50.580">
    <property type="match status" value="1"/>
</dbReference>
<dbReference type="Gene3D" id="3.40.1350.60">
    <property type="match status" value="1"/>
</dbReference>
<dbReference type="HAMAP" id="MF_00095">
    <property type="entry name" value="SfsA"/>
    <property type="match status" value="1"/>
</dbReference>
<dbReference type="InterPro" id="IPR005224">
    <property type="entry name" value="SfsA"/>
</dbReference>
<dbReference type="InterPro" id="IPR040452">
    <property type="entry name" value="SfsA_C"/>
</dbReference>
<dbReference type="InterPro" id="IPR041465">
    <property type="entry name" value="SfsA_N"/>
</dbReference>
<dbReference type="NCBIfam" id="TIGR00230">
    <property type="entry name" value="sfsA"/>
    <property type="match status" value="1"/>
</dbReference>
<dbReference type="PANTHER" id="PTHR30545">
    <property type="entry name" value="SUGAR FERMENTATION STIMULATION PROTEIN A"/>
    <property type="match status" value="1"/>
</dbReference>
<dbReference type="PANTHER" id="PTHR30545:SF2">
    <property type="entry name" value="SUGAR FERMENTATION STIMULATION PROTEIN A"/>
    <property type="match status" value="1"/>
</dbReference>
<dbReference type="Pfam" id="PF03749">
    <property type="entry name" value="SfsA"/>
    <property type="match status" value="1"/>
</dbReference>
<dbReference type="Pfam" id="PF17746">
    <property type="entry name" value="SfsA_N"/>
    <property type="match status" value="1"/>
</dbReference>
<reference key="1">
    <citation type="journal article" date="2008" name="J. Bacteriol.">
        <title>The complete genome sequence of Escherichia coli DH10B: insights into the biology of a laboratory workhorse.</title>
        <authorList>
            <person name="Durfee T."/>
            <person name="Nelson R."/>
            <person name="Baldwin S."/>
            <person name="Plunkett G. III"/>
            <person name="Burland V."/>
            <person name="Mau B."/>
            <person name="Petrosino J.F."/>
            <person name="Qin X."/>
            <person name="Muzny D.M."/>
            <person name="Ayele M."/>
            <person name="Gibbs R.A."/>
            <person name="Csorgo B."/>
            <person name="Posfai G."/>
            <person name="Weinstock G.M."/>
            <person name="Blattner F.R."/>
        </authorList>
    </citation>
    <scope>NUCLEOTIDE SEQUENCE [LARGE SCALE GENOMIC DNA]</scope>
    <source>
        <strain>K12 / DH10B</strain>
    </source>
</reference>
<organism>
    <name type="scientific">Escherichia coli (strain K12 / DH10B)</name>
    <dbReference type="NCBI Taxonomy" id="316385"/>
    <lineage>
        <taxon>Bacteria</taxon>
        <taxon>Pseudomonadati</taxon>
        <taxon>Pseudomonadota</taxon>
        <taxon>Gammaproteobacteria</taxon>
        <taxon>Enterobacterales</taxon>
        <taxon>Enterobacteriaceae</taxon>
        <taxon>Escherichia</taxon>
    </lineage>
</organism>
<sequence>MEFSPPLQRATLIQRYKRFLADVITPDGRELTLHCPNTGAMTGCATPGDTVWYSTSDNTKRKYPHTWELTQSQSGAFICVNTLWANRLTKEAILNESISELSGYSSLKSEVKYGAERSRIDFMLQADSRPDCYIEVKSVTLAENEQGYFPDAVTERGQKHLRELMSVAAEGQRAVIFFAVLHSAITRFSPARHIDEKYAQLLSEAQQRGVEILAYKAEISAEGMALKKSLPVTL</sequence>